<organism>
    <name type="scientific">Metallosphaera sedula (strain ATCC 51363 / DSM 5348 / JCM 9185 / NBRC 15509 / TH2)</name>
    <dbReference type="NCBI Taxonomy" id="399549"/>
    <lineage>
        <taxon>Archaea</taxon>
        <taxon>Thermoproteota</taxon>
        <taxon>Thermoprotei</taxon>
        <taxon>Sulfolobales</taxon>
        <taxon>Sulfolobaceae</taxon>
        <taxon>Metallosphaera</taxon>
    </lineage>
</organism>
<evidence type="ECO:0000255" key="1">
    <source>
        <dbReference type="HAMAP-Rule" id="MF_00736"/>
    </source>
</evidence>
<evidence type="ECO:0000305" key="2"/>
<name>RL11_METS5</name>
<proteinExistence type="inferred from homology"/>
<gene>
    <name evidence="1" type="primary">rpl11</name>
    <name type="ordered locus">Msed_1634</name>
</gene>
<feature type="chain" id="PRO_1000072802" description="Large ribosomal subunit protein uL11">
    <location>
        <begin position="1"/>
        <end position="168"/>
    </location>
</feature>
<dbReference type="EMBL" id="CP000682">
    <property type="protein sequence ID" value="ABP95789.1"/>
    <property type="molecule type" value="Genomic_DNA"/>
</dbReference>
<dbReference type="RefSeq" id="WP_012021576.1">
    <property type="nucleotide sequence ID" value="NC_009440.1"/>
</dbReference>
<dbReference type="SMR" id="A4YH87"/>
<dbReference type="STRING" id="399549.Msed_1634"/>
<dbReference type="GeneID" id="91756141"/>
<dbReference type="KEGG" id="mse:Msed_1634"/>
<dbReference type="eggNOG" id="arCOG04372">
    <property type="taxonomic scope" value="Archaea"/>
</dbReference>
<dbReference type="HOGENOM" id="CLU_074237_4_0_2"/>
<dbReference type="Proteomes" id="UP000000242">
    <property type="component" value="Chromosome"/>
</dbReference>
<dbReference type="GO" id="GO:0015934">
    <property type="term" value="C:large ribosomal subunit"/>
    <property type="evidence" value="ECO:0007669"/>
    <property type="project" value="TreeGrafter"/>
</dbReference>
<dbReference type="GO" id="GO:0070180">
    <property type="term" value="F:large ribosomal subunit rRNA binding"/>
    <property type="evidence" value="ECO:0007669"/>
    <property type="project" value="UniProtKB-UniRule"/>
</dbReference>
<dbReference type="GO" id="GO:0003735">
    <property type="term" value="F:structural constituent of ribosome"/>
    <property type="evidence" value="ECO:0007669"/>
    <property type="project" value="InterPro"/>
</dbReference>
<dbReference type="GO" id="GO:0006412">
    <property type="term" value="P:translation"/>
    <property type="evidence" value="ECO:0007669"/>
    <property type="project" value="UniProtKB-UniRule"/>
</dbReference>
<dbReference type="CDD" id="cd00349">
    <property type="entry name" value="Ribosomal_L11"/>
    <property type="match status" value="1"/>
</dbReference>
<dbReference type="FunFam" id="3.30.1550.10:FF:000007">
    <property type="entry name" value="50S ribosomal protein L11"/>
    <property type="match status" value="1"/>
</dbReference>
<dbReference type="Gene3D" id="1.10.10.250">
    <property type="entry name" value="Ribosomal protein L11, C-terminal domain"/>
    <property type="match status" value="1"/>
</dbReference>
<dbReference type="Gene3D" id="3.30.1550.10">
    <property type="entry name" value="Ribosomal protein L11/L12, N-terminal domain"/>
    <property type="match status" value="1"/>
</dbReference>
<dbReference type="HAMAP" id="MF_00736">
    <property type="entry name" value="Ribosomal_uL11"/>
    <property type="match status" value="1"/>
</dbReference>
<dbReference type="InterPro" id="IPR000911">
    <property type="entry name" value="Ribosomal_uL11"/>
</dbReference>
<dbReference type="InterPro" id="IPR020783">
    <property type="entry name" value="Ribosomal_uL11_C"/>
</dbReference>
<dbReference type="InterPro" id="IPR036769">
    <property type="entry name" value="Ribosomal_uL11_C_sf"/>
</dbReference>
<dbReference type="InterPro" id="IPR020785">
    <property type="entry name" value="Ribosomal_uL11_CS"/>
</dbReference>
<dbReference type="InterPro" id="IPR020784">
    <property type="entry name" value="Ribosomal_uL11_N"/>
</dbReference>
<dbReference type="InterPro" id="IPR036796">
    <property type="entry name" value="Ribosomal_uL11_N_sf"/>
</dbReference>
<dbReference type="NCBIfam" id="NF002232">
    <property type="entry name" value="PRK01143.1"/>
    <property type="match status" value="1"/>
</dbReference>
<dbReference type="PANTHER" id="PTHR11661">
    <property type="entry name" value="60S RIBOSOMAL PROTEIN L12"/>
    <property type="match status" value="1"/>
</dbReference>
<dbReference type="PANTHER" id="PTHR11661:SF1">
    <property type="entry name" value="LARGE RIBOSOMAL SUBUNIT PROTEIN UL11M"/>
    <property type="match status" value="1"/>
</dbReference>
<dbReference type="Pfam" id="PF00298">
    <property type="entry name" value="Ribosomal_L11"/>
    <property type="match status" value="1"/>
</dbReference>
<dbReference type="Pfam" id="PF03946">
    <property type="entry name" value="Ribosomal_L11_N"/>
    <property type="match status" value="1"/>
</dbReference>
<dbReference type="SMART" id="SM00649">
    <property type="entry name" value="RL11"/>
    <property type="match status" value="1"/>
</dbReference>
<dbReference type="SUPFAM" id="SSF54747">
    <property type="entry name" value="Ribosomal L11/L12e N-terminal domain"/>
    <property type="match status" value="1"/>
</dbReference>
<dbReference type="SUPFAM" id="SSF46906">
    <property type="entry name" value="Ribosomal protein L11, C-terminal domain"/>
    <property type="match status" value="1"/>
</dbReference>
<dbReference type="PROSITE" id="PS00359">
    <property type="entry name" value="RIBOSOMAL_L11"/>
    <property type="match status" value="1"/>
</dbReference>
<protein>
    <recommendedName>
        <fullName evidence="1">Large ribosomal subunit protein uL11</fullName>
    </recommendedName>
    <alternativeName>
        <fullName evidence="2">50S ribosomal protein L11</fullName>
    </alternativeName>
</protein>
<comment type="function">
    <text evidence="1">Forms part of the ribosomal stalk which helps the ribosome interact with GTP-bound translation factors.</text>
</comment>
<comment type="subunit">
    <text evidence="1">Part of the ribosomal stalk of the 50S ribosomal subunit. Interacts with L10 and the large rRNA to form the base of the stalk. L10 forms an elongated spine to which L12 dimers bind in a sequential fashion forming a multimeric L10(L12)X complex.</text>
</comment>
<comment type="similarity">
    <text evidence="1">Belongs to the universal ribosomal protein uL11 family.</text>
</comment>
<accession>A4YH87</accession>
<keyword id="KW-1185">Reference proteome</keyword>
<keyword id="KW-0687">Ribonucleoprotein</keyword>
<keyword id="KW-0689">Ribosomal protein</keyword>
<keyword id="KW-0694">RNA-binding</keyword>
<keyword id="KW-0699">rRNA-binding</keyword>
<sequence>MAKKSIKVVVEGGNVKPGPPLAPTLSQLGLNVGEVVKKINEATSQFKGMTVPVTLDVDTDTKKYEVSVGVPTTTSLLVKKAGASGPSGDPEHKKIGNISMDDVIEVAISKKPSLTAKELKGAVKSILGTAKSIGLTVDNKDPKLVVREVEEGKYDDKIKEMEEKWSSG</sequence>
<reference key="1">
    <citation type="journal article" date="2008" name="Appl. Environ. Microbiol.">
        <title>The genome sequence of the metal-mobilizing, extremely thermoacidophilic archaeon Metallosphaera sedula provides insights into bioleaching-associated metabolism.</title>
        <authorList>
            <person name="Auernik K.S."/>
            <person name="Maezato Y."/>
            <person name="Blum P.H."/>
            <person name="Kelly R.M."/>
        </authorList>
    </citation>
    <scope>NUCLEOTIDE SEQUENCE [LARGE SCALE GENOMIC DNA]</scope>
    <source>
        <strain>ATCC 51363 / DSM 5348 / JCM 9185 / NBRC 15509 / TH2</strain>
    </source>
</reference>